<reference key="1">
    <citation type="journal article" date="2007" name="Proc. Natl. Acad. Sci. U.S.A.">
        <title>Genome sequencing and comparative analysis of Saccharomyces cerevisiae strain YJM789.</title>
        <authorList>
            <person name="Wei W."/>
            <person name="McCusker J.H."/>
            <person name="Hyman R.W."/>
            <person name="Jones T."/>
            <person name="Ning Y."/>
            <person name="Cao Z."/>
            <person name="Gu Z."/>
            <person name="Bruno D."/>
            <person name="Miranda M."/>
            <person name="Nguyen M."/>
            <person name="Wilhelmy J."/>
            <person name="Komp C."/>
            <person name="Tamse R."/>
            <person name="Wang X."/>
            <person name="Jia P."/>
            <person name="Luedi P."/>
            <person name="Oefner P.J."/>
            <person name="David L."/>
            <person name="Dietrich F.S."/>
            <person name="Li Y."/>
            <person name="Davis R.W."/>
            <person name="Steinmetz L.M."/>
        </authorList>
    </citation>
    <scope>NUCLEOTIDE SEQUENCE [LARGE SCALE GENOMIC DNA]</scope>
    <source>
        <strain>YJM789</strain>
    </source>
</reference>
<keyword id="KW-0963">Cytoplasm</keyword>
<keyword id="KW-0256">Endoplasmic reticulum</keyword>
<keyword id="KW-0449">Lipoprotein</keyword>
<keyword id="KW-0472">Membrane</keyword>
<keyword id="KW-0488">Methylation</keyword>
<keyword id="KW-0576">Peroxisome</keyword>
<keyword id="KW-0962">Peroxisome biogenesis</keyword>
<keyword id="KW-0597">Phosphoprotein</keyword>
<keyword id="KW-0636">Prenylation</keyword>
<protein>
    <recommendedName>
        <fullName>Peroxisomal membrane protein import receptor PEX19</fullName>
    </recommendedName>
    <alternativeName>
        <fullName>Peroxin-19</fullName>
    </alternativeName>
</protein>
<comment type="function">
    <text evidence="2">Required for proper post-translational import and stabilization of peroxisomal membrane proteins (PMPs). Acts as a cytosolic import receptor for PMPs and delivers them to the docking factor PEX3 at the peroxisomal membrane for subsequent insertion into the membrane. Acts as a chaperone in stabilizing or maintaining PMPs in the lipid bilayer. Directs PEX17, a peripheral component of the peroxisomal matrix protein translocation machinery, to peroxisomes. Stabilizes VPS1, a protein required for peroxisomal fission, at the peroxisomal membrane. Also acts in conjunction with PEX3 in the formation of peroxisomes from preperoxisomal compartments at the endoplasmic reticulum during de novo peroxisome synthesis, probably via the import of additional PMPs.</text>
</comment>
<comment type="subunit">
    <text evidence="1">Interacts (farnesylated) with PEX3; farnesylation is required for this interaction. Interacts with PEX2, PEX5, PEX10, PEX11, PEX12, PEX13, PEX14, PEX17, PEX22, PEX25, PEX30 and PEX32; the interaction requires well-defined PEX19-binding sites within the peroxisomal membrane protein targeting signal (mPTS) of the PMPs and is independent on the presence of PEX3. Interacts with VPS1 (By similarity).</text>
</comment>
<comment type="subcellular location">
    <subcellularLocation>
        <location evidence="2">Cytoplasm</location>
    </subcellularLocation>
    <subcellularLocation>
        <location evidence="2">Peroxisome membrane</location>
        <topology evidence="2">Lipid-anchor</topology>
        <orientation evidence="2">Cytoplasmic side</orientation>
    </subcellularLocation>
    <subcellularLocation>
        <location evidence="2">Endoplasmic reticulum membrane</location>
    </subcellularLocation>
    <text evidence="2">Predominantly cytoplasmic. Concentrates in a PEX3-dependent manner to defined foci on the endoplasmic reticulum membrane, which then bud off to form newly sythesized peroxisomes.</text>
</comment>
<comment type="induction">
    <text evidence="1">By oleic acid (at protein level).</text>
</comment>
<comment type="similarity">
    <text evidence="4">Belongs to the peroxin-19 family.</text>
</comment>
<comment type="sequence caution" evidence="4">
    <conflict type="erroneous initiation">
        <sequence resource="EMBL-CDS" id="EDN60291"/>
    </conflict>
</comment>
<dbReference type="EMBL" id="AAFW02000145">
    <property type="protein sequence ID" value="EDN60291.1"/>
    <property type="status" value="ALT_INIT"/>
    <property type="molecule type" value="Genomic_DNA"/>
</dbReference>
<dbReference type="SMR" id="A6ZXR1"/>
<dbReference type="HOGENOM" id="CLU_863835_0_0_1"/>
<dbReference type="OrthoDB" id="36485at4893"/>
<dbReference type="Proteomes" id="UP000007060">
    <property type="component" value="Unassembled WGS sequence"/>
</dbReference>
<dbReference type="GO" id="GO:0005789">
    <property type="term" value="C:endoplasmic reticulum membrane"/>
    <property type="evidence" value="ECO:0007669"/>
    <property type="project" value="UniProtKB-SubCell"/>
</dbReference>
<dbReference type="GO" id="GO:0005778">
    <property type="term" value="C:peroxisomal membrane"/>
    <property type="evidence" value="ECO:0007669"/>
    <property type="project" value="UniProtKB-SubCell"/>
</dbReference>
<dbReference type="GO" id="GO:0033328">
    <property type="term" value="F:peroxisome membrane targeting sequence binding"/>
    <property type="evidence" value="ECO:0007669"/>
    <property type="project" value="TreeGrafter"/>
</dbReference>
<dbReference type="GO" id="GO:0045046">
    <property type="term" value="P:protein import into peroxisome membrane"/>
    <property type="evidence" value="ECO:0007669"/>
    <property type="project" value="TreeGrafter"/>
</dbReference>
<dbReference type="FunFam" id="1.20.120.900:FF:000003">
    <property type="entry name" value="Peroxisomal membrane protein import receptor PEX19"/>
    <property type="match status" value="1"/>
</dbReference>
<dbReference type="Gene3D" id="1.20.120.900">
    <property type="entry name" value="Pex19, mPTS binding domain"/>
    <property type="match status" value="1"/>
</dbReference>
<dbReference type="InterPro" id="IPR006708">
    <property type="entry name" value="Pex19"/>
</dbReference>
<dbReference type="InterPro" id="IPR038322">
    <property type="entry name" value="Pex19_C_sf"/>
</dbReference>
<dbReference type="PANTHER" id="PTHR12774">
    <property type="entry name" value="PEROXISOMAL BIOGENESIS FACTOR 19"/>
    <property type="match status" value="1"/>
</dbReference>
<dbReference type="PANTHER" id="PTHR12774:SF2">
    <property type="entry name" value="PEROXISOMAL BIOGENESIS FACTOR 19"/>
    <property type="match status" value="1"/>
</dbReference>
<dbReference type="Pfam" id="PF04614">
    <property type="entry name" value="Pex19"/>
    <property type="match status" value="1"/>
</dbReference>
<name>PEX19_YEAS7</name>
<gene>
    <name type="primary">PEX19</name>
    <name type="ORF">SCY_0849</name>
</gene>
<proteinExistence type="inferred from homology"/>
<accession>A6ZXR1</accession>
<sequence length="341" mass="38854">MNENEYDNFDDLDDLLDEDPTKLDEQSPMMCKRRFCVHDSENKEKNAESKDSDGVQVANESEEDPELKEMMVDLQNEFANLMKNNGNENNVKTEDFNKLISALEEAAKVPRQQMEQGSSSLKSNSTDKGTLNGSNPGFKNIVSNTLDRLKENGNKVDTSLAEETKESQRSGQNNNIDDILSQLLDQMVASGGKESAENQFDLKDGEMDDAITKILDQMTSKEVLYEPMKEMRSEFGVWFQENGENEEHKEKIGTYKRQFNIVDEIVNIYELKDYDELKHKDRVTELLDELEQLGDSPIRSANSPLKHGNEEEELMKMLEIDGNDPNLGNLDKELTDGCKQQ</sequence>
<organism>
    <name type="scientific">Saccharomyces cerevisiae (strain YJM789)</name>
    <name type="common">Baker's yeast</name>
    <dbReference type="NCBI Taxonomy" id="307796"/>
    <lineage>
        <taxon>Eukaryota</taxon>
        <taxon>Fungi</taxon>
        <taxon>Dikarya</taxon>
        <taxon>Ascomycota</taxon>
        <taxon>Saccharomycotina</taxon>
        <taxon>Saccharomycetes</taxon>
        <taxon>Saccharomycetales</taxon>
        <taxon>Saccharomycetaceae</taxon>
        <taxon>Saccharomyces</taxon>
    </lineage>
</organism>
<feature type="chain" id="PRO_0000343447" description="Peroxisomal membrane protein import receptor PEX19">
    <location>
        <begin position="1"/>
        <end position="338"/>
    </location>
</feature>
<feature type="propeptide" id="PRO_0000396706" description="Removed in mature form" evidence="1">
    <location>
        <begin position="339"/>
        <end position="341"/>
    </location>
</feature>
<feature type="region of interest" description="Disordered" evidence="3">
    <location>
        <begin position="1"/>
        <end position="26"/>
    </location>
</feature>
<feature type="region of interest" description="Disordered" evidence="3">
    <location>
        <begin position="39"/>
        <end position="66"/>
    </location>
</feature>
<feature type="region of interest" description="Disordered" evidence="3">
    <location>
        <begin position="109"/>
        <end position="141"/>
    </location>
</feature>
<feature type="region of interest" description="Disordered" evidence="3">
    <location>
        <begin position="293"/>
        <end position="312"/>
    </location>
</feature>
<feature type="region of interest" description="Disordered" evidence="3">
    <location>
        <begin position="318"/>
        <end position="341"/>
    </location>
</feature>
<feature type="compositionally biased region" description="Acidic residues" evidence="3">
    <location>
        <begin position="1"/>
        <end position="18"/>
    </location>
</feature>
<feature type="compositionally biased region" description="Basic and acidic residues" evidence="3">
    <location>
        <begin position="39"/>
        <end position="53"/>
    </location>
</feature>
<feature type="compositionally biased region" description="Polar residues" evidence="3">
    <location>
        <begin position="113"/>
        <end position="141"/>
    </location>
</feature>
<feature type="compositionally biased region" description="Basic and acidic residues" evidence="3">
    <location>
        <begin position="330"/>
        <end position="341"/>
    </location>
</feature>
<feature type="modified residue" description="Phosphoserine" evidence="2">
    <location>
        <position position="61"/>
    </location>
</feature>
<feature type="modified residue" description="Phosphoserine" evidence="2">
    <location>
        <position position="303"/>
    </location>
</feature>
<feature type="modified residue" description="Cysteine methyl ester" evidence="1">
    <location>
        <position position="338"/>
    </location>
</feature>
<feature type="lipid moiety-binding region" description="S-farnesyl cysteine" evidence="1">
    <location>
        <position position="338"/>
    </location>
</feature>
<evidence type="ECO:0000250" key="1"/>
<evidence type="ECO:0000250" key="2">
    <source>
        <dbReference type="UniProtKB" id="Q07418"/>
    </source>
</evidence>
<evidence type="ECO:0000256" key="3">
    <source>
        <dbReference type="SAM" id="MobiDB-lite"/>
    </source>
</evidence>
<evidence type="ECO:0000305" key="4"/>